<name>LEUC_GEOMG</name>
<protein>
    <recommendedName>
        <fullName evidence="1">3-isopropylmalate dehydratase large subunit</fullName>
        <ecNumber evidence="1">4.2.1.33</ecNumber>
    </recommendedName>
    <alternativeName>
        <fullName evidence="1">Alpha-IPM isomerase</fullName>
        <shortName evidence="1">IPMI</shortName>
    </alternativeName>
    <alternativeName>
        <fullName evidence="1">Isopropylmalate isomerase</fullName>
    </alternativeName>
</protein>
<dbReference type="EC" id="4.2.1.33" evidence="1"/>
<dbReference type="EMBL" id="CP000148">
    <property type="protein sequence ID" value="ABB31504.1"/>
    <property type="molecule type" value="Genomic_DNA"/>
</dbReference>
<dbReference type="RefSeq" id="WP_004512099.1">
    <property type="nucleotide sequence ID" value="NC_007517.1"/>
</dbReference>
<dbReference type="SMR" id="Q39W70"/>
<dbReference type="STRING" id="269799.Gmet_1268"/>
<dbReference type="KEGG" id="gme:Gmet_1268"/>
<dbReference type="eggNOG" id="COG0065">
    <property type="taxonomic scope" value="Bacteria"/>
</dbReference>
<dbReference type="HOGENOM" id="CLU_006714_3_4_7"/>
<dbReference type="UniPathway" id="UPA00048">
    <property type="reaction ID" value="UER00071"/>
</dbReference>
<dbReference type="Proteomes" id="UP000007073">
    <property type="component" value="Chromosome"/>
</dbReference>
<dbReference type="GO" id="GO:0003861">
    <property type="term" value="F:3-isopropylmalate dehydratase activity"/>
    <property type="evidence" value="ECO:0007669"/>
    <property type="project" value="UniProtKB-UniRule"/>
</dbReference>
<dbReference type="GO" id="GO:0051539">
    <property type="term" value="F:4 iron, 4 sulfur cluster binding"/>
    <property type="evidence" value="ECO:0007669"/>
    <property type="project" value="UniProtKB-KW"/>
</dbReference>
<dbReference type="GO" id="GO:0046872">
    <property type="term" value="F:metal ion binding"/>
    <property type="evidence" value="ECO:0007669"/>
    <property type="project" value="UniProtKB-KW"/>
</dbReference>
<dbReference type="GO" id="GO:0009098">
    <property type="term" value="P:L-leucine biosynthetic process"/>
    <property type="evidence" value="ECO:0007669"/>
    <property type="project" value="UniProtKB-UniRule"/>
</dbReference>
<dbReference type="CDD" id="cd01583">
    <property type="entry name" value="IPMI"/>
    <property type="match status" value="1"/>
</dbReference>
<dbReference type="Gene3D" id="3.30.499.10">
    <property type="entry name" value="Aconitase, domain 3"/>
    <property type="match status" value="2"/>
</dbReference>
<dbReference type="HAMAP" id="MF_01027">
    <property type="entry name" value="LeuC_type2"/>
    <property type="match status" value="1"/>
</dbReference>
<dbReference type="InterPro" id="IPR015931">
    <property type="entry name" value="Acnase/IPM_dHydase_lsu_aba_1/3"/>
</dbReference>
<dbReference type="InterPro" id="IPR001030">
    <property type="entry name" value="Acoase/IPM_deHydtase_lsu_aba"/>
</dbReference>
<dbReference type="InterPro" id="IPR018136">
    <property type="entry name" value="Aconitase_4Fe-4S_BS"/>
</dbReference>
<dbReference type="InterPro" id="IPR036008">
    <property type="entry name" value="Aconitase_4Fe-4S_dom"/>
</dbReference>
<dbReference type="InterPro" id="IPR011826">
    <property type="entry name" value="HAcnase/IPMdehydase_lsu_prok"/>
</dbReference>
<dbReference type="InterPro" id="IPR006251">
    <property type="entry name" value="Homoacnase/IPMdehydase_lsu"/>
</dbReference>
<dbReference type="InterPro" id="IPR050067">
    <property type="entry name" value="IPM_dehydratase_rel_enz"/>
</dbReference>
<dbReference type="InterPro" id="IPR033941">
    <property type="entry name" value="IPMI_cat"/>
</dbReference>
<dbReference type="NCBIfam" id="TIGR01343">
    <property type="entry name" value="hacA_fam"/>
    <property type="match status" value="1"/>
</dbReference>
<dbReference type="NCBIfam" id="TIGR02086">
    <property type="entry name" value="IPMI_arch"/>
    <property type="match status" value="1"/>
</dbReference>
<dbReference type="NCBIfam" id="NF001614">
    <property type="entry name" value="PRK00402.1"/>
    <property type="match status" value="1"/>
</dbReference>
<dbReference type="PANTHER" id="PTHR43822:SF16">
    <property type="entry name" value="3-ISOPROPYLMALATE DEHYDRATASE LARGE SUBUNIT 2"/>
    <property type="match status" value="1"/>
</dbReference>
<dbReference type="PANTHER" id="PTHR43822">
    <property type="entry name" value="HOMOACONITASE, MITOCHONDRIAL-RELATED"/>
    <property type="match status" value="1"/>
</dbReference>
<dbReference type="Pfam" id="PF00330">
    <property type="entry name" value="Aconitase"/>
    <property type="match status" value="2"/>
</dbReference>
<dbReference type="PRINTS" id="PR00415">
    <property type="entry name" value="ACONITASE"/>
</dbReference>
<dbReference type="SUPFAM" id="SSF53732">
    <property type="entry name" value="Aconitase iron-sulfur domain"/>
    <property type="match status" value="1"/>
</dbReference>
<dbReference type="PROSITE" id="PS00450">
    <property type="entry name" value="ACONITASE_1"/>
    <property type="match status" value="1"/>
</dbReference>
<dbReference type="PROSITE" id="PS01244">
    <property type="entry name" value="ACONITASE_2"/>
    <property type="match status" value="1"/>
</dbReference>
<feature type="chain" id="PRO_1000063648" description="3-isopropylmalate dehydratase large subunit">
    <location>
        <begin position="1"/>
        <end position="427"/>
    </location>
</feature>
<feature type="binding site" evidence="1">
    <location>
        <position position="308"/>
    </location>
    <ligand>
        <name>[4Fe-4S] cluster</name>
        <dbReference type="ChEBI" id="CHEBI:49883"/>
    </ligand>
</feature>
<feature type="binding site" evidence="1">
    <location>
        <position position="368"/>
    </location>
    <ligand>
        <name>[4Fe-4S] cluster</name>
        <dbReference type="ChEBI" id="CHEBI:49883"/>
    </ligand>
</feature>
<feature type="binding site" evidence="1">
    <location>
        <position position="371"/>
    </location>
    <ligand>
        <name>[4Fe-4S] cluster</name>
        <dbReference type="ChEBI" id="CHEBI:49883"/>
    </ligand>
</feature>
<evidence type="ECO:0000255" key="1">
    <source>
        <dbReference type="HAMAP-Rule" id="MF_01027"/>
    </source>
</evidence>
<accession>Q39W70</accession>
<keyword id="KW-0004">4Fe-4S</keyword>
<keyword id="KW-0028">Amino-acid biosynthesis</keyword>
<keyword id="KW-0100">Branched-chain amino acid biosynthesis</keyword>
<keyword id="KW-0408">Iron</keyword>
<keyword id="KW-0411">Iron-sulfur</keyword>
<keyword id="KW-0432">Leucine biosynthesis</keyword>
<keyword id="KW-0456">Lyase</keyword>
<keyword id="KW-0479">Metal-binding</keyword>
<keyword id="KW-1185">Reference proteome</keyword>
<gene>
    <name evidence="1" type="primary">leuC</name>
    <name type="ordered locus">Gmet_1268</name>
</gene>
<comment type="function">
    <text evidence="1">Catalyzes the isomerization between 2-isopropylmalate and 3-isopropylmalate, via the formation of 2-isopropylmaleate.</text>
</comment>
<comment type="catalytic activity">
    <reaction evidence="1">
        <text>(2R,3S)-3-isopropylmalate = (2S)-2-isopropylmalate</text>
        <dbReference type="Rhea" id="RHEA:32287"/>
        <dbReference type="ChEBI" id="CHEBI:1178"/>
        <dbReference type="ChEBI" id="CHEBI:35121"/>
        <dbReference type="EC" id="4.2.1.33"/>
    </reaction>
</comment>
<comment type="cofactor">
    <cofactor evidence="1">
        <name>[4Fe-4S] cluster</name>
        <dbReference type="ChEBI" id="CHEBI:49883"/>
    </cofactor>
    <text evidence="1">Binds 1 [4Fe-4S] cluster per subunit.</text>
</comment>
<comment type="pathway">
    <text evidence="1">Amino-acid biosynthesis; L-leucine biosynthesis; L-leucine from 3-methyl-2-oxobutanoate: step 2/4.</text>
</comment>
<comment type="subunit">
    <text evidence="1">Heterodimer of LeuC and LeuD.</text>
</comment>
<comment type="similarity">
    <text evidence="1">Belongs to the aconitase/IPM isomerase family. LeuC type 2 subfamily.</text>
</comment>
<sequence>MGKTTAEKIFASHLVDEPFSGTKVLRLDVVMCHEITTPIAIADLMARGKDRVFDPTKIKAVIDHVTPSKDSKTATQAKMLRDWARRHAIKDFFDVGHNGVCHALFPEKGYIRPGYTVIMGDSHTCTHGAFGAFAAGVGTTDLEVGILKGVCAFREPKSIRINLNGTLPKGVYAKDVILYVIGQLGVNGATDRVMEFRGPVVDAMTMESRMTLCNMAIEAGGTSGICMPDMVTVEYLWPFIENEYPSKEAALAEFSTWRSDDDAVYERVLDFDVSVLEPIVTFGYKPDQVKPISEIAGSPVDQVYLGSCTNGRLEDLRIAARILKGKKIAPSVRGILSPATPKIYKDAMAEGLIDIFMEAGFCVTNPTCGACLGMSNGVLAEGEVCASTTNRNFMGRMGKGGMVHLMSPATSAATAIEGVIADPRKYL</sequence>
<reference key="1">
    <citation type="journal article" date="2009" name="BMC Microbiol.">
        <title>The genome sequence of Geobacter metallireducens: features of metabolism, physiology and regulation common and dissimilar to Geobacter sulfurreducens.</title>
        <authorList>
            <person name="Aklujkar M."/>
            <person name="Krushkal J."/>
            <person name="DiBartolo G."/>
            <person name="Lapidus A."/>
            <person name="Land M.L."/>
            <person name="Lovley D.R."/>
        </authorList>
    </citation>
    <scope>NUCLEOTIDE SEQUENCE [LARGE SCALE GENOMIC DNA]</scope>
    <source>
        <strain>ATCC 53774 / DSM 7210 / GS-15</strain>
    </source>
</reference>
<proteinExistence type="inferred from homology"/>
<organism>
    <name type="scientific">Geobacter metallireducens (strain ATCC 53774 / DSM 7210 / GS-15)</name>
    <dbReference type="NCBI Taxonomy" id="269799"/>
    <lineage>
        <taxon>Bacteria</taxon>
        <taxon>Pseudomonadati</taxon>
        <taxon>Thermodesulfobacteriota</taxon>
        <taxon>Desulfuromonadia</taxon>
        <taxon>Geobacterales</taxon>
        <taxon>Geobacteraceae</taxon>
        <taxon>Geobacter</taxon>
    </lineage>
</organism>